<protein>
    <recommendedName>
        <fullName>Photosystem II reaction center W protein, chloroplastic</fullName>
    </recommendedName>
    <alternativeName>
        <fullName>PSII 6.1 kDa protein</fullName>
    </alternativeName>
</protein>
<gene>
    <name type="primary">PSBW</name>
    <name type="ordered locus">Os01g0773700</name>
    <name type="ordered locus">LOC_Os01g56680</name>
    <name type="ORF">P0490D09.17</name>
</gene>
<evidence type="ECO:0000250" key="1"/>
<evidence type="ECO:0000250" key="2">
    <source>
        <dbReference type="UniProtKB" id="Q39194"/>
    </source>
</evidence>
<evidence type="ECO:0000250" key="3">
    <source>
        <dbReference type="UniProtKB" id="Q41387"/>
    </source>
</evidence>
<evidence type="ECO:0000255" key="4"/>
<evidence type="ECO:0000305" key="5"/>
<dbReference type="EMBL" id="AP003265">
    <property type="protein sequence ID" value="BAD52944.1"/>
    <property type="molecule type" value="Genomic_DNA"/>
</dbReference>
<dbReference type="EMBL" id="AP008207">
    <property type="protein sequence ID" value="BAF06316.1"/>
    <property type="molecule type" value="Genomic_DNA"/>
</dbReference>
<dbReference type="EMBL" id="AP014957">
    <property type="protein sequence ID" value="BAS74581.1"/>
    <property type="molecule type" value="Genomic_DNA"/>
</dbReference>
<dbReference type="EMBL" id="AK060438">
    <property type="protein sequence ID" value="BAG87447.1"/>
    <property type="molecule type" value="mRNA"/>
</dbReference>
<dbReference type="EMBL" id="AK119161">
    <property type="protein sequence ID" value="BAG99557.1"/>
    <property type="molecule type" value="mRNA"/>
</dbReference>
<dbReference type="RefSeq" id="XP_015619359.1">
    <property type="nucleotide sequence ID" value="XM_015763873.1"/>
</dbReference>
<dbReference type="SMR" id="Q5ZBY9"/>
<dbReference type="FunCoup" id="Q5ZBY9">
    <property type="interactions" value="1343"/>
</dbReference>
<dbReference type="STRING" id="39947.Q5ZBY9"/>
<dbReference type="PaxDb" id="39947-Q5ZBY9"/>
<dbReference type="EnsemblPlants" id="Os01t0773700-02">
    <property type="protein sequence ID" value="Os01t0773700-02"/>
    <property type="gene ID" value="Os01g0773700"/>
</dbReference>
<dbReference type="Gramene" id="Os01t0773700-02">
    <property type="protein sequence ID" value="Os01t0773700-02"/>
    <property type="gene ID" value="Os01g0773700"/>
</dbReference>
<dbReference type="KEGG" id="dosa:Os01g0773700"/>
<dbReference type="eggNOG" id="ENOG502S50E">
    <property type="taxonomic scope" value="Eukaryota"/>
</dbReference>
<dbReference type="HOGENOM" id="CLU_156148_0_0_1"/>
<dbReference type="InParanoid" id="Q5ZBY9"/>
<dbReference type="OMA" id="VMARECK"/>
<dbReference type="Proteomes" id="UP000000763">
    <property type="component" value="Chromosome 1"/>
</dbReference>
<dbReference type="Proteomes" id="UP000059680">
    <property type="component" value="Chromosome 1"/>
</dbReference>
<dbReference type="GO" id="GO:0009535">
    <property type="term" value="C:chloroplast thylakoid membrane"/>
    <property type="evidence" value="ECO:0007669"/>
    <property type="project" value="UniProtKB-SubCell"/>
</dbReference>
<dbReference type="GO" id="GO:0009523">
    <property type="term" value="C:photosystem II"/>
    <property type="evidence" value="ECO:0007669"/>
    <property type="project" value="UniProtKB-KW"/>
</dbReference>
<dbReference type="GO" id="GO:0015979">
    <property type="term" value="P:photosynthesis"/>
    <property type="evidence" value="ECO:0007669"/>
    <property type="project" value="UniProtKB-KW"/>
</dbReference>
<dbReference type="GO" id="GO:0042549">
    <property type="term" value="P:photosystem II stabilization"/>
    <property type="evidence" value="ECO:0000318"/>
    <property type="project" value="GO_Central"/>
</dbReference>
<dbReference type="InterPro" id="IPR009806">
    <property type="entry name" value="PSII_PsbW_class2"/>
</dbReference>
<dbReference type="PANTHER" id="PTHR34552">
    <property type="entry name" value="PHOTOSYSTEM II REACTION CENTER W PROTEIN, CHLOROPLASTIC"/>
    <property type="match status" value="1"/>
</dbReference>
<dbReference type="PANTHER" id="PTHR34552:SF1">
    <property type="entry name" value="PHOTOSYSTEM II REACTION CENTER W PROTEIN, CHLOROPLASTIC"/>
    <property type="match status" value="1"/>
</dbReference>
<dbReference type="Pfam" id="PF07123">
    <property type="entry name" value="PsbW"/>
    <property type="match status" value="1"/>
</dbReference>
<comment type="function">
    <text evidence="2">Stabilizes dimeric photosystem II (PSII). In its absence no dimeric PSII accumulates and there is a reduction of monomeric PSII (By similarity).</text>
</comment>
<comment type="subunit">
    <text evidence="3">Part of the photosystem II complex. PSII is composed of 1 copy each of membrane proteins PsbA, PsbB, PsbC, PsbD, numerous small proteins, at least 3 peripheral proteins of the oxygen-evolving complex and a large number of cofactors. It forms dimeric complexes.</text>
</comment>
<comment type="subcellular location">
    <subcellularLocation>
        <location evidence="3">Plastid</location>
        <location evidence="3">Chloroplast thylakoid membrane</location>
        <topology>Single-pass membrane protein</topology>
    </subcellularLocation>
    <text evidence="3">The N-terminus is found within the thylakoid lumen (By similarity).</text>
</comment>
<comment type="similarity">
    <text evidence="5">Belongs to the psbW family.</text>
</comment>
<organism>
    <name type="scientific">Oryza sativa subsp. japonica</name>
    <name type="common">Rice</name>
    <dbReference type="NCBI Taxonomy" id="39947"/>
    <lineage>
        <taxon>Eukaryota</taxon>
        <taxon>Viridiplantae</taxon>
        <taxon>Streptophyta</taxon>
        <taxon>Embryophyta</taxon>
        <taxon>Tracheophyta</taxon>
        <taxon>Spermatophyta</taxon>
        <taxon>Magnoliopsida</taxon>
        <taxon>Liliopsida</taxon>
        <taxon>Poales</taxon>
        <taxon>Poaceae</taxon>
        <taxon>BOP clade</taxon>
        <taxon>Oryzoideae</taxon>
        <taxon>Oryzeae</taxon>
        <taxon>Oryzinae</taxon>
        <taxon>Oryza</taxon>
        <taxon>Oryza sativa</taxon>
    </lineage>
</organism>
<proteinExistence type="evidence at transcript level"/>
<keyword id="KW-0150">Chloroplast</keyword>
<keyword id="KW-0472">Membrane</keyword>
<keyword id="KW-0602">Photosynthesis</keyword>
<keyword id="KW-0604">Photosystem II</keyword>
<keyword id="KW-0934">Plastid</keyword>
<keyword id="KW-1185">Reference proteome</keyword>
<keyword id="KW-0793">Thylakoid</keyword>
<keyword id="KW-0809">Transit peptide</keyword>
<keyword id="KW-0812">Transmembrane</keyword>
<keyword id="KW-1133">Transmembrane helix</keyword>
<feature type="transit peptide" description="Chloroplast" evidence="4">
    <location>
        <begin position="1"/>
        <end position="36"/>
    </location>
</feature>
<feature type="transit peptide" description="Thylakoid" evidence="4">
    <location>
        <begin position="37"/>
        <end position="72"/>
    </location>
</feature>
<feature type="chain" id="PRO_0000271555" description="Photosystem II reaction center W protein, chloroplastic">
    <location>
        <begin position="73"/>
        <end position="124"/>
    </location>
</feature>
<feature type="topological domain" description="Lumenal, thylakoid" evidence="1">
    <location>
        <begin position="73"/>
        <end position="89"/>
    </location>
</feature>
<feature type="transmembrane region" description="Helical" evidence="4">
    <location>
        <begin position="90"/>
        <end position="110"/>
    </location>
</feature>
<feature type="topological domain" description="Stromal" evidence="1">
    <location>
        <begin position="111"/>
        <end position="124"/>
    </location>
</feature>
<accession>Q5ZBY9</accession>
<accession>B7E500</accession>
<reference key="1">
    <citation type="journal article" date="2002" name="Nature">
        <title>The genome sequence and structure of rice chromosome 1.</title>
        <authorList>
            <person name="Sasaki T."/>
            <person name="Matsumoto T."/>
            <person name="Yamamoto K."/>
            <person name="Sakata K."/>
            <person name="Baba T."/>
            <person name="Katayose Y."/>
            <person name="Wu J."/>
            <person name="Niimura Y."/>
            <person name="Cheng Z."/>
            <person name="Nagamura Y."/>
            <person name="Antonio B.A."/>
            <person name="Kanamori H."/>
            <person name="Hosokawa S."/>
            <person name="Masukawa M."/>
            <person name="Arikawa K."/>
            <person name="Chiden Y."/>
            <person name="Hayashi M."/>
            <person name="Okamoto M."/>
            <person name="Ando T."/>
            <person name="Aoki H."/>
            <person name="Arita K."/>
            <person name="Hamada M."/>
            <person name="Harada C."/>
            <person name="Hijishita S."/>
            <person name="Honda M."/>
            <person name="Ichikawa Y."/>
            <person name="Idonuma A."/>
            <person name="Iijima M."/>
            <person name="Ikeda M."/>
            <person name="Ikeno M."/>
            <person name="Ito S."/>
            <person name="Ito T."/>
            <person name="Ito Y."/>
            <person name="Ito Y."/>
            <person name="Iwabuchi A."/>
            <person name="Kamiya K."/>
            <person name="Karasawa W."/>
            <person name="Katagiri S."/>
            <person name="Kikuta A."/>
            <person name="Kobayashi N."/>
            <person name="Kono I."/>
            <person name="Machita K."/>
            <person name="Maehara T."/>
            <person name="Mizuno H."/>
            <person name="Mizubayashi T."/>
            <person name="Mukai Y."/>
            <person name="Nagasaki H."/>
            <person name="Nakashima M."/>
            <person name="Nakama Y."/>
            <person name="Nakamichi Y."/>
            <person name="Nakamura M."/>
            <person name="Namiki N."/>
            <person name="Negishi M."/>
            <person name="Ohta I."/>
            <person name="Ono N."/>
            <person name="Saji S."/>
            <person name="Sakai K."/>
            <person name="Shibata M."/>
            <person name="Shimokawa T."/>
            <person name="Shomura A."/>
            <person name="Song J."/>
            <person name="Takazaki Y."/>
            <person name="Terasawa K."/>
            <person name="Tsuji K."/>
            <person name="Waki K."/>
            <person name="Yamagata H."/>
            <person name="Yamane H."/>
            <person name="Yoshiki S."/>
            <person name="Yoshihara R."/>
            <person name="Yukawa K."/>
            <person name="Zhong H."/>
            <person name="Iwama H."/>
            <person name="Endo T."/>
            <person name="Ito H."/>
            <person name="Hahn J.H."/>
            <person name="Kim H.-I."/>
            <person name="Eun M.-Y."/>
            <person name="Yano M."/>
            <person name="Jiang J."/>
            <person name="Gojobori T."/>
        </authorList>
    </citation>
    <scope>NUCLEOTIDE SEQUENCE [LARGE SCALE GENOMIC DNA]</scope>
    <source>
        <strain>cv. Nipponbare</strain>
    </source>
</reference>
<reference key="2">
    <citation type="journal article" date="2005" name="Nature">
        <title>The map-based sequence of the rice genome.</title>
        <authorList>
            <consortium name="International rice genome sequencing project (IRGSP)"/>
        </authorList>
    </citation>
    <scope>NUCLEOTIDE SEQUENCE [LARGE SCALE GENOMIC DNA]</scope>
    <source>
        <strain>cv. Nipponbare</strain>
    </source>
</reference>
<reference key="3">
    <citation type="journal article" date="2008" name="Nucleic Acids Res.">
        <title>The rice annotation project database (RAP-DB): 2008 update.</title>
        <authorList>
            <consortium name="The rice annotation project (RAP)"/>
        </authorList>
    </citation>
    <scope>GENOME REANNOTATION</scope>
    <source>
        <strain>cv. Nipponbare</strain>
    </source>
</reference>
<reference key="4">
    <citation type="journal article" date="2013" name="Rice">
        <title>Improvement of the Oryza sativa Nipponbare reference genome using next generation sequence and optical map data.</title>
        <authorList>
            <person name="Kawahara Y."/>
            <person name="de la Bastide M."/>
            <person name="Hamilton J.P."/>
            <person name="Kanamori H."/>
            <person name="McCombie W.R."/>
            <person name="Ouyang S."/>
            <person name="Schwartz D.C."/>
            <person name="Tanaka T."/>
            <person name="Wu J."/>
            <person name="Zhou S."/>
            <person name="Childs K.L."/>
            <person name="Davidson R.M."/>
            <person name="Lin H."/>
            <person name="Quesada-Ocampo L."/>
            <person name="Vaillancourt B."/>
            <person name="Sakai H."/>
            <person name="Lee S.S."/>
            <person name="Kim J."/>
            <person name="Numa H."/>
            <person name="Itoh T."/>
            <person name="Buell C.R."/>
            <person name="Matsumoto T."/>
        </authorList>
    </citation>
    <scope>GENOME REANNOTATION</scope>
    <source>
        <strain>cv. Nipponbare</strain>
    </source>
</reference>
<reference key="5">
    <citation type="journal article" date="2003" name="Science">
        <title>Collection, mapping, and annotation of over 28,000 cDNA clones from japonica rice.</title>
        <authorList>
            <consortium name="The rice full-length cDNA consortium"/>
        </authorList>
    </citation>
    <scope>NUCLEOTIDE SEQUENCE [LARGE SCALE MRNA]</scope>
    <source>
        <strain>cv. Nipponbare</strain>
    </source>
</reference>
<name>PSBW_ORYSJ</name>
<sequence>MATVSAAAATSVVARAVLAGPLGLPQMRARRSERVRCNYSKEAATPAAAVKGAGASLLAMAATAAPAMALVDERMSTEGTGLSLGLSNNLLGWILLGVFGLIWSLYTIYTSDLEEDEESGGLSL</sequence>